<sequence length="202" mass="22317">MTQVRETVSFKAGDVILYPGVPGPRDRAYRVLEGLVRLEAVDEEGNALTLRLVRPGGFFGEEALFGQERIYFAEAATDVRLEPLPENPDPELLKDLAQHLSQGLAEAYRRIERLATQRLKNRMAAALLELSETPLAHEEEGKVVLKATHDELAAAVGSVRETVTKVIGELAREGYIRSGYGKIQLLDLKGLKELAESRGQGR</sequence>
<name>SDRP_THET8</name>
<reference evidence="6 7" key="1">
    <citation type="submission" date="2004-11" db="EMBL/GenBank/DDBJ databases">
        <title>Complete genome sequence of Thermus thermophilus HB8.</title>
        <authorList>
            <person name="Masui R."/>
            <person name="Kurokawa K."/>
            <person name="Nakagawa N."/>
            <person name="Tokunaga F."/>
            <person name="Koyama Y."/>
            <person name="Shibata T."/>
            <person name="Oshima T."/>
            <person name="Yokoyama S."/>
            <person name="Yasunaga T."/>
            <person name="Kuramitsu S."/>
        </authorList>
    </citation>
    <scope>NUCLEOTIDE SEQUENCE [LARGE SCALE GENOMIC DNA]</scope>
    <source>
        <strain evidence="7">ATCC 27634 / DSM 579 / HB8</strain>
    </source>
</reference>
<reference evidence="8" key="2">
    <citation type="journal article" date="2008" name="Mol. Microbiol.">
        <title>Global gene expression mediated by Thermus thermophilus SdrP, a CRP/FNR family transcriptional regulator.</title>
        <authorList>
            <person name="Agari Y."/>
            <person name="Kashihara A."/>
            <person name="Yokoyama S."/>
            <person name="Kuramitsu S."/>
            <person name="Shinkai A."/>
        </authorList>
    </citation>
    <scope>PROTEIN SEQUENCE OF 2-6</scope>
    <scope>X-RAY CRYSTALLOGRAPHY (1.50 ANGSTROMS)</scope>
    <scope>FUNCTION</scope>
    <scope>SUBUNIT</scope>
    <scope>INDUCTION</scope>
    <scope>DISRUPTION PHENOTYPE</scope>
</reference>
<reference key="3">
    <citation type="journal article" date="2010" name="FEMS Microbiol. Lett.">
        <title>Identification of novel genes regulated by the oxidative stress-responsive transcriptional activator SdrP in Thermus thermophilus HB8.</title>
        <authorList>
            <person name="Agari Y."/>
            <person name="Kuramitsu S."/>
            <person name="Shinkai A."/>
        </authorList>
    </citation>
    <scope>FUNCTION</scope>
    <scope>INDUCTION</scope>
</reference>
<proteinExistence type="evidence at protein level"/>
<comment type="function">
    <text evidence="2 3">Activates transcription. The consensus DNA-binding site of this transcriptional regulator is 5'-WWGTGAN(5-7)ACACWW-3' in which W is A or T and N is G, A, T or C. Regulated genes include those encoding proteins involved in nutrient and energy supply, redox control and polyadenylation of mRNA (PubMed:18699868). Also regulates genes involved in oxidative stress response such as genes encoding manganese superoxide dismutase and catalase, and genes encoding a protein involved in nucleotide excision repair of damaged DNA and putative proteins involved in redox control, protein degradation and transcriptional regulation (PubMed:21054499).</text>
</comment>
<comment type="subunit">
    <text evidence="2">Homodimer.</text>
</comment>
<comment type="induction">
    <text evidence="2 3">Increased expression during the stationary phase when grown at 70 degrees Celsius (PubMed:18699868). Increased expression during the logarithmic growth phase in oxidative stress and upon treatment with diamide. Increased expression by heavy metal ion, antibiotic, high salt and organic solvent stresses (PubMed:21054499).</text>
</comment>
<comment type="disruption phenotype">
    <text evidence="2">Viable, but has growth defects, particularly when grown in a synthetic medium. Increased sensitivity to disulfide stress. Decreased expression of TTHA0986, TTHA0770, TTHA0337, TTHA1028, TTHA0654, TTHA0655, TTHA0769, TTHA0425, TTHA0634, TTHA0635, TTHA0636, TTHA0637, TTHA0638, TTHA0570, TTHA0030, TTHA0460, TTHB243, TTHA1128, TTHA0035, TTHA0520 and TTHA1803 genes.</text>
</comment>
<accession>Q5SIL0</accession>
<feature type="initiator methionine" description="Removed" evidence="2">
    <location>
        <position position="1"/>
    </location>
</feature>
<feature type="chain" id="PRO_0000436259" description="Transcriptional regulator SdrP">
    <location>
        <begin position="2"/>
        <end position="202"/>
    </location>
</feature>
<feature type="domain" description="HTH crp-type" evidence="1">
    <location>
        <begin position="117"/>
        <end position="189"/>
    </location>
</feature>
<feature type="DNA-binding region" description="H-T-H motif" evidence="1">
    <location>
        <begin position="149"/>
        <end position="168"/>
    </location>
</feature>
<feature type="strand" evidence="9">
    <location>
        <begin position="8"/>
        <end position="10"/>
    </location>
</feature>
<feature type="strand" evidence="9">
    <location>
        <begin position="15"/>
        <end position="17"/>
    </location>
</feature>
<feature type="strand" evidence="9">
    <location>
        <begin position="19"/>
        <end position="21"/>
    </location>
</feature>
<feature type="strand" evidence="9">
    <location>
        <begin position="29"/>
        <end position="34"/>
    </location>
</feature>
<feature type="strand" evidence="9">
    <location>
        <begin position="36"/>
        <end position="41"/>
    </location>
</feature>
<feature type="strand" evidence="9">
    <location>
        <begin position="47"/>
        <end position="53"/>
    </location>
</feature>
<feature type="helix" evidence="9">
    <location>
        <begin position="61"/>
        <end position="64"/>
    </location>
</feature>
<feature type="strand" evidence="9">
    <location>
        <begin position="71"/>
        <end position="77"/>
    </location>
</feature>
<feature type="strand" evidence="9">
    <location>
        <begin position="79"/>
        <end position="83"/>
    </location>
</feature>
<feature type="helix" evidence="9">
    <location>
        <begin position="90"/>
        <end position="116"/>
    </location>
</feature>
<feature type="helix" evidence="9">
    <location>
        <begin position="119"/>
        <end position="130"/>
    </location>
</feature>
<feature type="strand" evidence="9">
    <location>
        <begin position="136"/>
        <end position="139"/>
    </location>
</feature>
<feature type="strand" evidence="9">
    <location>
        <begin position="142"/>
        <end position="146"/>
    </location>
</feature>
<feature type="helix" evidence="9">
    <location>
        <begin position="149"/>
        <end position="156"/>
    </location>
</feature>
<feature type="helix" evidence="9">
    <location>
        <begin position="160"/>
        <end position="172"/>
    </location>
</feature>
<feature type="strand" evidence="9">
    <location>
        <begin position="175"/>
        <end position="179"/>
    </location>
</feature>
<feature type="strand" evidence="9">
    <location>
        <begin position="182"/>
        <end position="186"/>
    </location>
</feature>
<feature type="helix" evidence="9">
    <location>
        <begin position="188"/>
        <end position="195"/>
    </location>
</feature>
<keyword id="KW-0002">3D-structure</keyword>
<keyword id="KW-0903">Direct protein sequencing</keyword>
<keyword id="KW-0238">DNA-binding</keyword>
<keyword id="KW-1185">Reference proteome</keyword>
<keyword id="KW-0804">Transcription</keyword>
<keyword id="KW-0805">Transcription regulation</keyword>
<evidence type="ECO:0000255" key="1">
    <source>
        <dbReference type="PROSITE-ProRule" id="PRU00387"/>
    </source>
</evidence>
<evidence type="ECO:0000269" key="2">
    <source>
    </source>
</evidence>
<evidence type="ECO:0000269" key="3">
    <source>
    </source>
</evidence>
<evidence type="ECO:0000303" key="4">
    <source>
    </source>
</evidence>
<evidence type="ECO:0000303" key="5">
    <source>
    </source>
</evidence>
<evidence type="ECO:0000312" key="6">
    <source>
        <dbReference type="EMBL" id="BAD71182.1"/>
    </source>
</evidence>
<evidence type="ECO:0000312" key="7">
    <source>
        <dbReference type="Proteomes" id="UP000000532"/>
    </source>
</evidence>
<evidence type="ECO:0007744" key="8">
    <source>
        <dbReference type="PDB" id="2ZCW"/>
    </source>
</evidence>
<evidence type="ECO:0007829" key="9">
    <source>
        <dbReference type="PDB" id="2ZCW"/>
    </source>
</evidence>
<dbReference type="EMBL" id="AP008226">
    <property type="protein sequence ID" value="BAD71182.1"/>
    <property type="molecule type" value="Genomic_DNA"/>
</dbReference>
<dbReference type="RefSeq" id="YP_144625.1">
    <property type="nucleotide sequence ID" value="NC_006461.1"/>
</dbReference>
<dbReference type="PDB" id="2ZCW">
    <property type="method" value="X-ray"/>
    <property type="resolution" value="1.50 A"/>
    <property type="chains" value="A=1-202"/>
</dbReference>
<dbReference type="PDBsum" id="2ZCW"/>
<dbReference type="SMR" id="Q5SIL0"/>
<dbReference type="EnsemblBacteria" id="BAD71182">
    <property type="protein sequence ID" value="BAD71182"/>
    <property type="gene ID" value="BAD71182"/>
</dbReference>
<dbReference type="GeneID" id="3169114"/>
<dbReference type="KEGG" id="ttj:TTHA1359"/>
<dbReference type="PATRIC" id="fig|300852.9.peg.1336"/>
<dbReference type="eggNOG" id="COG0664">
    <property type="taxonomic scope" value="Bacteria"/>
</dbReference>
<dbReference type="HOGENOM" id="CLU_075053_3_1_0"/>
<dbReference type="PhylomeDB" id="Q5SIL0"/>
<dbReference type="EvolutionaryTrace" id="Q5SIL0"/>
<dbReference type="Proteomes" id="UP000000532">
    <property type="component" value="Chromosome"/>
</dbReference>
<dbReference type="GO" id="GO:0005829">
    <property type="term" value="C:cytosol"/>
    <property type="evidence" value="ECO:0007669"/>
    <property type="project" value="TreeGrafter"/>
</dbReference>
<dbReference type="GO" id="GO:0003677">
    <property type="term" value="F:DNA binding"/>
    <property type="evidence" value="ECO:0000314"/>
    <property type="project" value="UniProtKB"/>
</dbReference>
<dbReference type="GO" id="GO:0001216">
    <property type="term" value="F:DNA-binding transcription activator activity"/>
    <property type="evidence" value="ECO:0000314"/>
    <property type="project" value="UniProtKB"/>
</dbReference>
<dbReference type="GO" id="GO:0042803">
    <property type="term" value="F:protein homodimerization activity"/>
    <property type="evidence" value="ECO:0000314"/>
    <property type="project" value="UniProtKB"/>
</dbReference>
<dbReference type="GO" id="GO:0045893">
    <property type="term" value="P:positive regulation of DNA-templated transcription"/>
    <property type="evidence" value="ECO:0000314"/>
    <property type="project" value="UniProtKB"/>
</dbReference>
<dbReference type="GO" id="GO:0006979">
    <property type="term" value="P:response to oxidative stress"/>
    <property type="evidence" value="ECO:0000315"/>
    <property type="project" value="UniProtKB"/>
</dbReference>
<dbReference type="CDD" id="cd00038">
    <property type="entry name" value="CAP_ED"/>
    <property type="match status" value="1"/>
</dbReference>
<dbReference type="FunFam" id="1.10.10.10:FF:000019">
    <property type="entry name" value="Crp/Fnr family transcriptional regulator"/>
    <property type="match status" value="1"/>
</dbReference>
<dbReference type="FunFam" id="2.60.120.10:FF:000157">
    <property type="entry name" value="Crp/Fnr family transcriptional regulator"/>
    <property type="match status" value="1"/>
</dbReference>
<dbReference type="Gene3D" id="2.60.120.10">
    <property type="entry name" value="Jelly Rolls"/>
    <property type="match status" value="1"/>
</dbReference>
<dbReference type="Gene3D" id="1.10.10.10">
    <property type="entry name" value="Winged helix-like DNA-binding domain superfamily/Winged helix DNA-binding domain"/>
    <property type="match status" value="1"/>
</dbReference>
<dbReference type="InterPro" id="IPR000595">
    <property type="entry name" value="cNMP-bd_dom"/>
</dbReference>
<dbReference type="InterPro" id="IPR018490">
    <property type="entry name" value="cNMP-bd_dom_sf"/>
</dbReference>
<dbReference type="InterPro" id="IPR050397">
    <property type="entry name" value="Env_Response_Regulators"/>
</dbReference>
<dbReference type="InterPro" id="IPR012318">
    <property type="entry name" value="HTH_CRP"/>
</dbReference>
<dbReference type="InterPro" id="IPR014710">
    <property type="entry name" value="RmlC-like_jellyroll"/>
</dbReference>
<dbReference type="InterPro" id="IPR036388">
    <property type="entry name" value="WH-like_DNA-bd_sf"/>
</dbReference>
<dbReference type="InterPro" id="IPR036390">
    <property type="entry name" value="WH_DNA-bd_sf"/>
</dbReference>
<dbReference type="NCBIfam" id="NF010499">
    <property type="entry name" value="PRK13918.1"/>
    <property type="match status" value="1"/>
</dbReference>
<dbReference type="PANTHER" id="PTHR24567">
    <property type="entry name" value="CRP FAMILY TRANSCRIPTIONAL REGULATORY PROTEIN"/>
    <property type="match status" value="1"/>
</dbReference>
<dbReference type="PANTHER" id="PTHR24567:SF74">
    <property type="entry name" value="HTH-TYPE TRANSCRIPTIONAL REGULATOR ARCR"/>
    <property type="match status" value="1"/>
</dbReference>
<dbReference type="Pfam" id="PF00027">
    <property type="entry name" value="cNMP_binding"/>
    <property type="match status" value="1"/>
</dbReference>
<dbReference type="Pfam" id="PF13545">
    <property type="entry name" value="HTH_Crp_2"/>
    <property type="match status" value="1"/>
</dbReference>
<dbReference type="SMART" id="SM00419">
    <property type="entry name" value="HTH_CRP"/>
    <property type="match status" value="1"/>
</dbReference>
<dbReference type="SUPFAM" id="SSF51206">
    <property type="entry name" value="cAMP-binding domain-like"/>
    <property type="match status" value="1"/>
</dbReference>
<dbReference type="SUPFAM" id="SSF46785">
    <property type="entry name" value="Winged helix' DNA-binding domain"/>
    <property type="match status" value="1"/>
</dbReference>
<dbReference type="PROSITE" id="PS50042">
    <property type="entry name" value="CNMP_BINDING_3"/>
    <property type="match status" value="1"/>
</dbReference>
<dbReference type="PROSITE" id="PS51063">
    <property type="entry name" value="HTH_CRP_2"/>
    <property type="match status" value="1"/>
</dbReference>
<organism evidence="6">
    <name type="scientific">Thermus thermophilus (strain ATCC 27634 / DSM 579 / HB8)</name>
    <dbReference type="NCBI Taxonomy" id="300852"/>
    <lineage>
        <taxon>Bacteria</taxon>
        <taxon>Thermotogati</taxon>
        <taxon>Deinococcota</taxon>
        <taxon>Deinococci</taxon>
        <taxon>Thermales</taxon>
        <taxon>Thermaceae</taxon>
        <taxon>Thermus</taxon>
    </lineage>
</organism>
<protein>
    <recommendedName>
        <fullName evidence="4">Transcriptional regulator SdrP</fullName>
    </recommendedName>
    <alternativeName>
        <fullName evidence="4">Cyclic AMP receptor protein/Fumarate and nitrate reduction regulator superfamily protein SdrP</fullName>
        <shortName evidence="4">CRP/FNR superfamily protein SdrP</shortName>
    </alternativeName>
    <alternativeName>
        <fullName evidence="5">Oxidative stress-responsive transcriptional activator SdrP</fullName>
    </alternativeName>
    <alternativeName>
        <fullName evidence="5">Stationary phase-dependent regulatory protein</fullName>
        <shortName evidence="5">SdrP</shortName>
    </alternativeName>
</protein>
<gene>
    <name evidence="6" type="ordered locus">TTHA1359</name>
</gene>